<accession>B4TXD2</accession>
<gene>
    <name evidence="1" type="primary">rplN</name>
    <name type="ordered locus">SeSA_A3626</name>
</gene>
<protein>
    <recommendedName>
        <fullName evidence="1">Large ribosomal subunit protein uL14</fullName>
    </recommendedName>
    <alternativeName>
        <fullName evidence="2">50S ribosomal protein L14</fullName>
    </alternativeName>
</protein>
<keyword id="KW-0687">Ribonucleoprotein</keyword>
<keyword id="KW-0689">Ribosomal protein</keyword>
<keyword id="KW-0694">RNA-binding</keyword>
<keyword id="KW-0699">rRNA-binding</keyword>
<feature type="chain" id="PRO_1000144328" description="Large ribosomal subunit protein uL14">
    <location>
        <begin position="1"/>
        <end position="123"/>
    </location>
</feature>
<dbReference type="EMBL" id="CP001127">
    <property type="protein sequence ID" value="ACF91653.1"/>
    <property type="molecule type" value="Genomic_DNA"/>
</dbReference>
<dbReference type="RefSeq" id="WP_000613954.1">
    <property type="nucleotide sequence ID" value="NC_011094.1"/>
</dbReference>
<dbReference type="SMR" id="B4TXD2"/>
<dbReference type="GeneID" id="98390432"/>
<dbReference type="KEGG" id="sew:SeSA_A3626"/>
<dbReference type="HOGENOM" id="CLU_095071_2_1_6"/>
<dbReference type="Proteomes" id="UP000001865">
    <property type="component" value="Chromosome"/>
</dbReference>
<dbReference type="GO" id="GO:0022625">
    <property type="term" value="C:cytosolic large ribosomal subunit"/>
    <property type="evidence" value="ECO:0007669"/>
    <property type="project" value="TreeGrafter"/>
</dbReference>
<dbReference type="GO" id="GO:0070180">
    <property type="term" value="F:large ribosomal subunit rRNA binding"/>
    <property type="evidence" value="ECO:0007669"/>
    <property type="project" value="TreeGrafter"/>
</dbReference>
<dbReference type="GO" id="GO:0003735">
    <property type="term" value="F:structural constituent of ribosome"/>
    <property type="evidence" value="ECO:0007669"/>
    <property type="project" value="InterPro"/>
</dbReference>
<dbReference type="GO" id="GO:0006412">
    <property type="term" value="P:translation"/>
    <property type="evidence" value="ECO:0007669"/>
    <property type="project" value="UniProtKB-UniRule"/>
</dbReference>
<dbReference type="CDD" id="cd00337">
    <property type="entry name" value="Ribosomal_uL14"/>
    <property type="match status" value="1"/>
</dbReference>
<dbReference type="FunFam" id="2.40.150.20:FF:000001">
    <property type="entry name" value="50S ribosomal protein L14"/>
    <property type="match status" value="1"/>
</dbReference>
<dbReference type="Gene3D" id="2.40.150.20">
    <property type="entry name" value="Ribosomal protein L14"/>
    <property type="match status" value="1"/>
</dbReference>
<dbReference type="HAMAP" id="MF_01367">
    <property type="entry name" value="Ribosomal_uL14"/>
    <property type="match status" value="1"/>
</dbReference>
<dbReference type="InterPro" id="IPR000218">
    <property type="entry name" value="Ribosomal_uL14"/>
</dbReference>
<dbReference type="InterPro" id="IPR005745">
    <property type="entry name" value="Ribosomal_uL14_bac-type"/>
</dbReference>
<dbReference type="InterPro" id="IPR019972">
    <property type="entry name" value="Ribosomal_uL14_CS"/>
</dbReference>
<dbReference type="InterPro" id="IPR036853">
    <property type="entry name" value="Ribosomal_uL14_sf"/>
</dbReference>
<dbReference type="NCBIfam" id="TIGR01067">
    <property type="entry name" value="rplN_bact"/>
    <property type="match status" value="1"/>
</dbReference>
<dbReference type="PANTHER" id="PTHR11761">
    <property type="entry name" value="50S/60S RIBOSOMAL PROTEIN L14/L23"/>
    <property type="match status" value="1"/>
</dbReference>
<dbReference type="PANTHER" id="PTHR11761:SF3">
    <property type="entry name" value="LARGE RIBOSOMAL SUBUNIT PROTEIN UL14M"/>
    <property type="match status" value="1"/>
</dbReference>
<dbReference type="Pfam" id="PF00238">
    <property type="entry name" value="Ribosomal_L14"/>
    <property type="match status" value="1"/>
</dbReference>
<dbReference type="SMART" id="SM01374">
    <property type="entry name" value="Ribosomal_L14"/>
    <property type="match status" value="1"/>
</dbReference>
<dbReference type="SUPFAM" id="SSF50193">
    <property type="entry name" value="Ribosomal protein L14"/>
    <property type="match status" value="1"/>
</dbReference>
<dbReference type="PROSITE" id="PS00049">
    <property type="entry name" value="RIBOSOMAL_L14"/>
    <property type="match status" value="1"/>
</dbReference>
<proteinExistence type="inferred from homology"/>
<evidence type="ECO:0000255" key="1">
    <source>
        <dbReference type="HAMAP-Rule" id="MF_01367"/>
    </source>
</evidence>
<evidence type="ECO:0000305" key="2"/>
<comment type="function">
    <text evidence="1">Binds to 23S rRNA. Forms part of two intersubunit bridges in the 70S ribosome.</text>
</comment>
<comment type="subunit">
    <text evidence="1">Part of the 50S ribosomal subunit. Forms a cluster with proteins L3 and L19. In the 70S ribosome, L14 and L19 interact and together make contacts with the 16S rRNA in bridges B5 and B8.</text>
</comment>
<comment type="similarity">
    <text evidence="1">Belongs to the universal ribosomal protein uL14 family.</text>
</comment>
<organism>
    <name type="scientific">Salmonella schwarzengrund (strain CVM19633)</name>
    <dbReference type="NCBI Taxonomy" id="439843"/>
    <lineage>
        <taxon>Bacteria</taxon>
        <taxon>Pseudomonadati</taxon>
        <taxon>Pseudomonadota</taxon>
        <taxon>Gammaproteobacteria</taxon>
        <taxon>Enterobacterales</taxon>
        <taxon>Enterobacteriaceae</taxon>
        <taxon>Salmonella</taxon>
    </lineage>
</organism>
<reference key="1">
    <citation type="journal article" date="2011" name="J. Bacteriol.">
        <title>Comparative genomics of 28 Salmonella enterica isolates: evidence for CRISPR-mediated adaptive sublineage evolution.</title>
        <authorList>
            <person name="Fricke W.F."/>
            <person name="Mammel M.K."/>
            <person name="McDermott P.F."/>
            <person name="Tartera C."/>
            <person name="White D.G."/>
            <person name="Leclerc J.E."/>
            <person name="Ravel J."/>
            <person name="Cebula T.A."/>
        </authorList>
    </citation>
    <scope>NUCLEOTIDE SEQUENCE [LARGE SCALE GENOMIC DNA]</scope>
    <source>
        <strain>CVM19633</strain>
    </source>
</reference>
<name>RL14_SALSV</name>
<sequence>MIQEQTMLNVADNSGARRVMCIKVLGGSHRRYAGVGDIIKITIKEAIPRGKVKKGDVLKAVVVRTKKGVRRPDGSVIRFDGNACVILNNNSEQPIGTRIFGPVTRELRNEKFMKIISLAPEVL</sequence>